<organism>
    <name type="scientific">Sus scrofa</name>
    <name type="common">Pig</name>
    <dbReference type="NCBI Taxonomy" id="9823"/>
    <lineage>
        <taxon>Eukaryota</taxon>
        <taxon>Metazoa</taxon>
        <taxon>Chordata</taxon>
        <taxon>Craniata</taxon>
        <taxon>Vertebrata</taxon>
        <taxon>Euteleostomi</taxon>
        <taxon>Mammalia</taxon>
        <taxon>Eutheria</taxon>
        <taxon>Laurasiatheria</taxon>
        <taxon>Artiodactyla</taxon>
        <taxon>Suina</taxon>
        <taxon>Suidae</taxon>
        <taxon>Sus</taxon>
    </lineage>
</organism>
<name>PFKAM_PIG</name>
<evidence type="ECO:0000250" key="1"/>
<evidence type="ECO:0000250" key="2">
    <source>
        <dbReference type="UniProtKB" id="P00511"/>
    </source>
</evidence>
<evidence type="ECO:0000250" key="3">
    <source>
        <dbReference type="UniProtKB" id="P08237"/>
    </source>
</evidence>
<evidence type="ECO:0000250" key="4">
    <source>
        <dbReference type="UniProtKB" id="P47857"/>
    </source>
</evidence>
<evidence type="ECO:0000255" key="5">
    <source>
        <dbReference type="HAMAP-Rule" id="MF_03184"/>
    </source>
</evidence>
<evidence type="ECO:0000305" key="6"/>
<keyword id="KW-0007">Acetylation</keyword>
<keyword id="KW-0021">Allosteric enzyme</keyword>
<keyword id="KW-0067">ATP-binding</keyword>
<keyword id="KW-0963">Cytoplasm</keyword>
<keyword id="KW-0324">Glycolysis</keyword>
<keyword id="KW-0325">Glycoprotein</keyword>
<keyword id="KW-0379">Hydroxylation</keyword>
<keyword id="KW-0418">Kinase</keyword>
<keyword id="KW-0460">Magnesium</keyword>
<keyword id="KW-0479">Metal-binding</keyword>
<keyword id="KW-0547">Nucleotide-binding</keyword>
<keyword id="KW-0597">Phosphoprotein</keyword>
<keyword id="KW-1185">Reference proteome</keyword>
<keyword id="KW-0808">Transferase</keyword>
<reference key="1">
    <citation type="submission" date="2006-01" db="EMBL/GenBank/DDBJ databases">
        <title>Cloning and characterization of porcine phosphofructokinase, muscle (PFKM).</title>
        <authorList>
            <person name="Wang J."/>
            <person name="Deng C.Y."/>
            <person name="Xiong Y.Z."/>
        </authorList>
    </citation>
    <scope>NUCLEOTIDE SEQUENCE [MRNA]</scope>
</reference>
<comment type="function">
    <text evidence="5">Catalyzes the phosphorylation of D-fructose 6-phosphate to fructose 1,6-bisphosphate by ATP, the first committing step of glycolysis.</text>
</comment>
<comment type="catalytic activity">
    <reaction evidence="5">
        <text>beta-D-fructose 6-phosphate + ATP = beta-D-fructose 1,6-bisphosphate + ADP + H(+)</text>
        <dbReference type="Rhea" id="RHEA:16109"/>
        <dbReference type="ChEBI" id="CHEBI:15378"/>
        <dbReference type="ChEBI" id="CHEBI:30616"/>
        <dbReference type="ChEBI" id="CHEBI:32966"/>
        <dbReference type="ChEBI" id="CHEBI:57634"/>
        <dbReference type="ChEBI" id="CHEBI:456216"/>
        <dbReference type="EC" id="2.7.1.11"/>
    </reaction>
</comment>
<comment type="cofactor">
    <cofactor evidence="5">
        <name>Mg(2+)</name>
        <dbReference type="ChEBI" id="CHEBI:18420"/>
    </cofactor>
</comment>
<comment type="activity regulation">
    <text evidence="5">Allosterically activated by ADP, AMP, or fructose 2,6-bisphosphate, and allosterically inhibited by ATP or citrate.</text>
</comment>
<comment type="pathway">
    <text evidence="5">Carbohydrate degradation; glycolysis; D-glyceraldehyde 3-phosphate and glycerone phosphate from D-glucose: step 3/4.</text>
</comment>
<comment type="subunit">
    <text evidence="4 5 6">Homo- and heterotetramers (By similarity). Phosphofructokinase (PFK) enzyme functions as a tetramer composed of different combinations of 3 types of subunits, called PFKM (M), PFKL (L) and PFKP (P). The composition of the PFK tetramer differs according to the tissue type it is present in. The kinetic and regulatory properties of the tetrameric enzyme are dependent on the subunit composition, hence can vary across tissues (Probable). Interacts (via C-terminus) with HK1 (via N-terminal spermatogenic cell-specific region) (By similarity).</text>
</comment>
<comment type="subcellular location">
    <subcellularLocation>
        <location evidence="5">Cytoplasm</location>
    </subcellularLocation>
</comment>
<comment type="PTM">
    <text evidence="1">GlcNAcylation decreases enzyme activity.</text>
</comment>
<comment type="similarity">
    <text evidence="5">Belongs to the phosphofructokinase type A (PFKA) family. ATP-dependent PFK group I subfamily. Eukaryotic two domain clade 'E' sub-subfamily.</text>
</comment>
<gene>
    <name type="primary">PFKM</name>
</gene>
<sequence length="780" mass="85327">MTHEEHHAAKSLGVGKAIAVLTSGGDAQGMNAAVRAVVRVGIYTGARVFFVHEGYQGLVDGGDNIREATWESVSMMLQLGGTVIGSARCKDFREREGRLRAAHNLVKRGITNLCVIGGDGSLTGADTFRSEWGDLLNDLQKAGKITAEEANKSSYLNIVGLVGSIDNDFCGTDMTIGTDSALHRIIEIVDAITTTAQSHQRTFVLEVMGRHCGYLALVTSLSCGADWVFIPECPPDDAWEEHLCRRLSETRTRGSRLNIIIVAEGAIDKNGQLITSENIKDLVVKRLGYDTRVTVLGHVQRGGTPSAFDRILGSRMGVEAVMALLEGTPDTPACVVSLSGNQAVRLPLMECVQVTKDVTKAMNEKRFDEAMKLRGRSFMNNWEVYKLLAHVRPPVTKSGSYTVAVMNVGAPTAGMNAAVRSTVRIGLIQGNRVLVVHDGFEGLAKGQIEEAGWSYVGGWTGQGGSKLGTKRTLPKKSFEQISANITKFNIQGLVIIGGFEAYTGGLELMEGRKQYDELCIPFVVIPATVSNNVPGSDFSVGADTALNTICMTCDRIKQSAAGTKRRVFIIETMGGYCGYLATMAGLAAGADAAYIFEEPFTIRDLQVNVEHLVQKMKTTVKRGLVLRNEKCNENYTTDFIFNLYSEEGKGIFDSRKNVLGHMQQGGSPTPLDRNFATKMGAKAMNWMSGKIKESYRNGRIFANTPDSGCVLGMRKRALVFQPVTELKEQTDFEHRIPKEQWWLKLRPILKILAKYEIDLDTSEHAHLEHITRKRSGEATI</sequence>
<accession>Q2HYU2</accession>
<proteinExistence type="evidence at transcript level"/>
<protein>
    <recommendedName>
        <fullName evidence="5">ATP-dependent 6-phosphofructokinase, muscle type</fullName>
        <shortName evidence="5">ATP-PFK</shortName>
        <shortName>PFK-M</shortName>
        <ecNumber evidence="5">2.7.1.11</ecNumber>
    </recommendedName>
    <alternativeName>
        <fullName>6-phosphofructokinase type A</fullName>
    </alternativeName>
    <alternativeName>
        <fullName>Phosphofructo-1-kinase isozyme A</fullName>
        <shortName>PFK-A</shortName>
    </alternativeName>
    <alternativeName>
        <fullName evidence="5">Phosphohexokinase</fullName>
    </alternativeName>
</protein>
<feature type="initiator methionine" description="Removed" evidence="2">
    <location>
        <position position="1"/>
    </location>
</feature>
<feature type="chain" id="PRO_0000289804" description="ATP-dependent 6-phosphofructokinase, muscle type">
    <location>
        <begin position="2"/>
        <end position="780"/>
    </location>
</feature>
<feature type="region of interest" description="N-terminal catalytic PFK domain 1">
    <location>
        <begin position="2"/>
        <end position="390"/>
    </location>
</feature>
<feature type="region of interest" description="Interdomain linker">
    <location>
        <begin position="391"/>
        <end position="401"/>
    </location>
</feature>
<feature type="region of interest" description="C-terminal regulatory PFK domain 2">
    <location>
        <begin position="402"/>
        <end position="780"/>
    </location>
</feature>
<feature type="active site" description="Proton acceptor" evidence="5">
    <location>
        <position position="166"/>
    </location>
</feature>
<feature type="binding site" evidence="5">
    <location>
        <position position="25"/>
    </location>
    <ligand>
        <name>ATP</name>
        <dbReference type="ChEBI" id="CHEBI:30616"/>
    </ligand>
</feature>
<feature type="binding site" evidence="5">
    <location>
        <begin position="88"/>
        <end position="89"/>
    </location>
    <ligand>
        <name>ATP</name>
        <dbReference type="ChEBI" id="CHEBI:30616"/>
    </ligand>
</feature>
<feature type="binding site" evidence="5">
    <location>
        <begin position="118"/>
        <end position="121"/>
    </location>
    <ligand>
        <name>ATP</name>
        <dbReference type="ChEBI" id="CHEBI:30616"/>
    </ligand>
</feature>
<feature type="binding site" evidence="5">
    <location>
        <position position="119"/>
    </location>
    <ligand>
        <name>Mg(2+)</name>
        <dbReference type="ChEBI" id="CHEBI:18420"/>
        <note>catalytic</note>
    </ligand>
</feature>
<feature type="binding site" description="in other chain" evidence="5">
    <location>
        <begin position="164"/>
        <end position="166"/>
    </location>
    <ligand>
        <name>substrate</name>
        <note>ligand shared between dimeric partners</note>
    </ligand>
</feature>
<feature type="binding site" evidence="5">
    <location>
        <position position="201"/>
    </location>
    <ligand>
        <name>substrate</name>
        <note>ligand shared between dimeric partners</note>
    </ligand>
</feature>
<feature type="binding site" description="in other chain" evidence="5">
    <location>
        <begin position="208"/>
        <end position="210"/>
    </location>
    <ligand>
        <name>substrate</name>
        <note>ligand shared between dimeric partners</note>
    </ligand>
</feature>
<feature type="binding site" description="in other chain" evidence="5">
    <location>
        <position position="264"/>
    </location>
    <ligand>
        <name>substrate</name>
        <note>ligand shared between dimeric partners</note>
    </ligand>
</feature>
<feature type="binding site" evidence="5">
    <location>
        <position position="292"/>
    </location>
    <ligand>
        <name>substrate</name>
        <note>ligand shared between dimeric partners</note>
    </ligand>
</feature>
<feature type="binding site" description="in other chain" evidence="5">
    <location>
        <begin position="298"/>
        <end position="301"/>
    </location>
    <ligand>
        <name>substrate</name>
        <note>ligand shared between dimeric partners</note>
    </ligand>
</feature>
<feature type="binding site" description="in other chain" evidence="5">
    <location>
        <position position="471"/>
    </location>
    <ligand>
        <name>beta-D-fructose 2,6-bisphosphate</name>
        <dbReference type="ChEBI" id="CHEBI:58579"/>
        <note>allosteric activator; ligand shared between dimeric partners</note>
    </ligand>
</feature>
<feature type="binding site" description="in other chain" evidence="5">
    <location>
        <begin position="528"/>
        <end position="532"/>
    </location>
    <ligand>
        <name>beta-D-fructose 2,6-bisphosphate</name>
        <dbReference type="ChEBI" id="CHEBI:58579"/>
        <note>allosteric activator; ligand shared between dimeric partners</note>
    </ligand>
</feature>
<feature type="binding site" evidence="5">
    <location>
        <position position="566"/>
    </location>
    <ligand>
        <name>beta-D-fructose 2,6-bisphosphate</name>
        <dbReference type="ChEBI" id="CHEBI:58579"/>
        <note>allosteric activator; ligand shared between dimeric partners</note>
    </ligand>
</feature>
<feature type="binding site" description="in other chain" evidence="5">
    <location>
        <begin position="573"/>
        <end position="575"/>
    </location>
    <ligand>
        <name>beta-D-fructose 2,6-bisphosphate</name>
        <dbReference type="ChEBI" id="CHEBI:58579"/>
        <note>allosteric activator; ligand shared between dimeric partners</note>
    </ligand>
</feature>
<feature type="binding site" description="in other chain" evidence="5">
    <location>
        <position position="629"/>
    </location>
    <ligand>
        <name>beta-D-fructose 2,6-bisphosphate</name>
        <dbReference type="ChEBI" id="CHEBI:58579"/>
        <note>allosteric activator; ligand shared between dimeric partners</note>
    </ligand>
</feature>
<feature type="binding site" evidence="5">
    <location>
        <position position="655"/>
    </location>
    <ligand>
        <name>beta-D-fructose 2,6-bisphosphate</name>
        <dbReference type="ChEBI" id="CHEBI:58579"/>
        <note>allosteric activator; ligand shared between dimeric partners</note>
    </ligand>
</feature>
<feature type="binding site" description="in other chain" evidence="5">
    <location>
        <begin position="661"/>
        <end position="664"/>
    </location>
    <ligand>
        <name>beta-D-fructose 2,6-bisphosphate</name>
        <dbReference type="ChEBI" id="CHEBI:58579"/>
        <note>allosteric activator; ligand shared between dimeric partners</note>
    </ligand>
</feature>
<feature type="binding site" description="in other chain" evidence="5">
    <location>
        <position position="735"/>
    </location>
    <ligand>
        <name>beta-D-fructose 2,6-bisphosphate</name>
        <dbReference type="ChEBI" id="CHEBI:58579"/>
        <note>allosteric activator; ligand shared between dimeric partners</note>
    </ligand>
</feature>
<feature type="modified residue" description="N-acetylthreonine" evidence="2">
    <location>
        <position position="2"/>
    </location>
</feature>
<feature type="modified residue" description="Phosphoserine" evidence="4">
    <location>
        <position position="377"/>
    </location>
</feature>
<feature type="modified residue" description="N6-(2-hydroxyisobutyryl)lysine" evidence="3">
    <location>
        <position position="557"/>
    </location>
</feature>
<feature type="modified residue" description="Phosphoserine" evidence="3">
    <location>
        <position position="667"/>
    </location>
</feature>
<feature type="modified residue" description="Phosphoserine" evidence="2">
    <location>
        <position position="775"/>
    </location>
</feature>
<feature type="glycosylation site" description="O-linked (GlcNAc) serine" evidence="1">
    <location>
        <position position="530"/>
    </location>
</feature>
<dbReference type="EC" id="2.7.1.11" evidence="5"/>
<dbReference type="EMBL" id="DQ363336">
    <property type="protein sequence ID" value="ABC94908.1"/>
    <property type="molecule type" value="mRNA"/>
</dbReference>
<dbReference type="RefSeq" id="NP_001038015.1">
    <property type="nucleotide sequence ID" value="NM_001044550.1"/>
</dbReference>
<dbReference type="SMR" id="Q2HYU2"/>
<dbReference type="FunCoup" id="Q2HYU2">
    <property type="interactions" value="921"/>
</dbReference>
<dbReference type="STRING" id="9823.ENSSSCP00000031307"/>
<dbReference type="GlyCosmos" id="Q2HYU2">
    <property type="glycosylation" value="1 site, No reported glycans"/>
</dbReference>
<dbReference type="GlyGen" id="Q2HYU2">
    <property type="glycosylation" value="1 site"/>
</dbReference>
<dbReference type="PaxDb" id="9823-ENSSSCP00000021675"/>
<dbReference type="PeptideAtlas" id="Q2HYU2"/>
<dbReference type="GeneID" id="733601"/>
<dbReference type="KEGG" id="ssc:733601"/>
<dbReference type="CTD" id="5213"/>
<dbReference type="eggNOG" id="KOG2440">
    <property type="taxonomic scope" value="Eukaryota"/>
</dbReference>
<dbReference type="InParanoid" id="Q2HYU2"/>
<dbReference type="OrthoDB" id="537915at2759"/>
<dbReference type="UniPathway" id="UPA00109">
    <property type="reaction ID" value="UER00182"/>
</dbReference>
<dbReference type="Proteomes" id="UP000008227">
    <property type="component" value="Unplaced"/>
</dbReference>
<dbReference type="Proteomes" id="UP000314985">
    <property type="component" value="Unplaced"/>
</dbReference>
<dbReference type="Proteomes" id="UP000694570">
    <property type="component" value="Unplaced"/>
</dbReference>
<dbReference type="Proteomes" id="UP000694571">
    <property type="component" value="Unplaced"/>
</dbReference>
<dbReference type="Proteomes" id="UP000694720">
    <property type="component" value="Unplaced"/>
</dbReference>
<dbReference type="Proteomes" id="UP000694722">
    <property type="component" value="Unplaced"/>
</dbReference>
<dbReference type="Proteomes" id="UP000694723">
    <property type="component" value="Unplaced"/>
</dbReference>
<dbReference type="Proteomes" id="UP000694724">
    <property type="component" value="Unplaced"/>
</dbReference>
<dbReference type="Proteomes" id="UP000694725">
    <property type="component" value="Unplaced"/>
</dbReference>
<dbReference type="Proteomes" id="UP000694726">
    <property type="component" value="Unplaced"/>
</dbReference>
<dbReference type="Proteomes" id="UP000694727">
    <property type="component" value="Unplaced"/>
</dbReference>
<dbReference type="Proteomes" id="UP000694728">
    <property type="component" value="Unplaced"/>
</dbReference>
<dbReference type="GO" id="GO:0005945">
    <property type="term" value="C:6-phosphofructokinase complex"/>
    <property type="evidence" value="ECO:0000318"/>
    <property type="project" value="GO_Central"/>
</dbReference>
<dbReference type="GO" id="GO:0016020">
    <property type="term" value="C:membrane"/>
    <property type="evidence" value="ECO:0000318"/>
    <property type="project" value="GO_Central"/>
</dbReference>
<dbReference type="GO" id="GO:0003872">
    <property type="term" value="F:6-phosphofructokinase activity"/>
    <property type="evidence" value="ECO:0000250"/>
    <property type="project" value="UniProtKB"/>
</dbReference>
<dbReference type="GO" id="GO:0005524">
    <property type="term" value="F:ATP binding"/>
    <property type="evidence" value="ECO:0007669"/>
    <property type="project" value="UniProtKB-KW"/>
</dbReference>
<dbReference type="GO" id="GO:0070095">
    <property type="term" value="F:fructose-6-phosphate binding"/>
    <property type="evidence" value="ECO:0000318"/>
    <property type="project" value="GO_Central"/>
</dbReference>
<dbReference type="GO" id="GO:0046872">
    <property type="term" value="F:metal ion binding"/>
    <property type="evidence" value="ECO:0007669"/>
    <property type="project" value="UniProtKB-KW"/>
</dbReference>
<dbReference type="GO" id="GO:0061621">
    <property type="term" value="P:canonical glycolysis"/>
    <property type="evidence" value="ECO:0000318"/>
    <property type="project" value="GO_Central"/>
</dbReference>
<dbReference type="GO" id="GO:0030388">
    <property type="term" value="P:fructose 1,6-bisphosphate metabolic process"/>
    <property type="evidence" value="ECO:0000318"/>
    <property type="project" value="GO_Central"/>
</dbReference>
<dbReference type="GO" id="GO:0006002">
    <property type="term" value="P:fructose 6-phosphate metabolic process"/>
    <property type="evidence" value="ECO:0000318"/>
    <property type="project" value="GO_Central"/>
</dbReference>
<dbReference type="CDD" id="cd00764">
    <property type="entry name" value="Eukaryotic_PFK"/>
    <property type="match status" value="1"/>
</dbReference>
<dbReference type="FunFam" id="3.40.50.460:FF:000001">
    <property type="entry name" value="ATP-dependent 6-phosphofructokinase"/>
    <property type="match status" value="1"/>
</dbReference>
<dbReference type="FunFam" id="3.40.50.460:FF:000003">
    <property type="entry name" value="ATP-dependent 6-phosphofructokinase"/>
    <property type="match status" value="1"/>
</dbReference>
<dbReference type="FunFam" id="3.40.50.450:FF:000043">
    <property type="entry name" value="ATP-dependent 6-phosphofructokinase, platelet type"/>
    <property type="match status" value="1"/>
</dbReference>
<dbReference type="Gene3D" id="3.40.50.450">
    <property type="match status" value="2"/>
</dbReference>
<dbReference type="Gene3D" id="3.40.50.460">
    <property type="entry name" value="Phosphofructokinase domain"/>
    <property type="match status" value="2"/>
</dbReference>
<dbReference type="HAMAP" id="MF_03184">
    <property type="entry name" value="Phosphofructokinase_I_E"/>
    <property type="match status" value="1"/>
</dbReference>
<dbReference type="InterPro" id="IPR009161">
    <property type="entry name" value="6-Pfructokinase_euk"/>
</dbReference>
<dbReference type="InterPro" id="IPR022953">
    <property type="entry name" value="ATP_PFK"/>
</dbReference>
<dbReference type="InterPro" id="IPR041914">
    <property type="entry name" value="PFK_vert-type"/>
</dbReference>
<dbReference type="InterPro" id="IPR015912">
    <property type="entry name" value="Phosphofructokinase_CS"/>
</dbReference>
<dbReference type="InterPro" id="IPR000023">
    <property type="entry name" value="Phosphofructokinase_dom"/>
</dbReference>
<dbReference type="InterPro" id="IPR035966">
    <property type="entry name" value="PKF_sf"/>
</dbReference>
<dbReference type="NCBIfam" id="TIGR02478">
    <property type="entry name" value="6PF1K_euk"/>
    <property type="match status" value="1"/>
</dbReference>
<dbReference type="PANTHER" id="PTHR13697:SF59">
    <property type="entry name" value="ATP-DEPENDENT 6-PHOSPHOFRUCTOKINASE, MUSCLE TYPE"/>
    <property type="match status" value="1"/>
</dbReference>
<dbReference type="PANTHER" id="PTHR13697">
    <property type="entry name" value="PHOSPHOFRUCTOKINASE"/>
    <property type="match status" value="1"/>
</dbReference>
<dbReference type="Pfam" id="PF00365">
    <property type="entry name" value="PFK"/>
    <property type="match status" value="2"/>
</dbReference>
<dbReference type="PIRSF" id="PIRSF000533">
    <property type="entry name" value="ATP_PFK_euk"/>
    <property type="match status" value="1"/>
</dbReference>
<dbReference type="PRINTS" id="PR00476">
    <property type="entry name" value="PHFRCTKINASE"/>
</dbReference>
<dbReference type="SUPFAM" id="SSF53784">
    <property type="entry name" value="Phosphofructokinase"/>
    <property type="match status" value="2"/>
</dbReference>
<dbReference type="PROSITE" id="PS00433">
    <property type="entry name" value="PHOSPHOFRUCTOKINASE"/>
    <property type="match status" value="2"/>
</dbReference>